<evidence type="ECO:0000255" key="1">
    <source>
        <dbReference type="HAMAP-Rule" id="MF_00052"/>
    </source>
</evidence>
<evidence type="ECO:0000255" key="2">
    <source>
        <dbReference type="PROSITE-ProRule" id="PRU01319"/>
    </source>
</evidence>
<accession>A1UEF9</accession>
<gene>
    <name evidence="1" type="primary">rnhB</name>
    <name type="ordered locus">Mkms_2018</name>
</gene>
<reference key="1">
    <citation type="submission" date="2006-12" db="EMBL/GenBank/DDBJ databases">
        <title>Complete sequence of chromosome of Mycobacterium sp. KMS.</title>
        <authorList>
            <consortium name="US DOE Joint Genome Institute"/>
            <person name="Copeland A."/>
            <person name="Lucas S."/>
            <person name="Lapidus A."/>
            <person name="Barry K."/>
            <person name="Detter J.C."/>
            <person name="Glavina del Rio T."/>
            <person name="Hammon N."/>
            <person name="Israni S."/>
            <person name="Dalin E."/>
            <person name="Tice H."/>
            <person name="Pitluck S."/>
            <person name="Kiss H."/>
            <person name="Brettin T."/>
            <person name="Bruce D."/>
            <person name="Han C."/>
            <person name="Tapia R."/>
            <person name="Gilna P."/>
            <person name="Schmutz J."/>
            <person name="Larimer F."/>
            <person name="Land M."/>
            <person name="Hauser L."/>
            <person name="Kyrpides N."/>
            <person name="Mikhailova N."/>
            <person name="Miller C.D."/>
            <person name="Richardson P."/>
        </authorList>
    </citation>
    <scope>NUCLEOTIDE SEQUENCE [LARGE SCALE GENOMIC DNA]</scope>
    <source>
        <strain>KMS</strain>
    </source>
</reference>
<organism>
    <name type="scientific">Mycobacterium sp. (strain KMS)</name>
    <dbReference type="NCBI Taxonomy" id="189918"/>
    <lineage>
        <taxon>Bacteria</taxon>
        <taxon>Bacillati</taxon>
        <taxon>Actinomycetota</taxon>
        <taxon>Actinomycetes</taxon>
        <taxon>Mycobacteriales</taxon>
        <taxon>Mycobacteriaceae</taxon>
        <taxon>Mycobacterium</taxon>
    </lineage>
</organism>
<name>RNH2_MYCSK</name>
<protein>
    <recommendedName>
        <fullName evidence="1">Ribonuclease HII</fullName>
        <shortName evidence="1">RNase HII</shortName>
        <ecNumber evidence="1">3.1.26.4</ecNumber>
    </recommendedName>
</protein>
<proteinExistence type="inferred from homology"/>
<feature type="chain" id="PRO_1000031166" description="Ribonuclease HII">
    <location>
        <begin position="1"/>
        <end position="239"/>
    </location>
</feature>
<feature type="domain" description="RNase H type-2" evidence="2">
    <location>
        <begin position="30"/>
        <end position="221"/>
    </location>
</feature>
<feature type="binding site" evidence="1">
    <location>
        <position position="36"/>
    </location>
    <ligand>
        <name>a divalent metal cation</name>
        <dbReference type="ChEBI" id="CHEBI:60240"/>
    </ligand>
</feature>
<feature type="binding site" evidence="1">
    <location>
        <position position="37"/>
    </location>
    <ligand>
        <name>a divalent metal cation</name>
        <dbReference type="ChEBI" id="CHEBI:60240"/>
    </ligand>
</feature>
<feature type="binding site" evidence="1">
    <location>
        <position position="130"/>
    </location>
    <ligand>
        <name>a divalent metal cation</name>
        <dbReference type="ChEBI" id="CHEBI:60240"/>
    </ligand>
</feature>
<keyword id="KW-0963">Cytoplasm</keyword>
<keyword id="KW-0255">Endonuclease</keyword>
<keyword id="KW-0378">Hydrolase</keyword>
<keyword id="KW-0464">Manganese</keyword>
<keyword id="KW-0479">Metal-binding</keyword>
<keyword id="KW-0540">Nuclease</keyword>
<dbReference type="EC" id="3.1.26.4" evidence="1"/>
<dbReference type="EMBL" id="CP000518">
    <property type="protein sequence ID" value="ABL91217.1"/>
    <property type="molecule type" value="Genomic_DNA"/>
</dbReference>
<dbReference type="SMR" id="A1UEF9"/>
<dbReference type="STRING" id="189918.Mkms_2018"/>
<dbReference type="KEGG" id="mkm:Mkms_2018"/>
<dbReference type="HOGENOM" id="CLU_036532_1_0_11"/>
<dbReference type="OrthoDB" id="9803420at2"/>
<dbReference type="GO" id="GO:0005737">
    <property type="term" value="C:cytoplasm"/>
    <property type="evidence" value="ECO:0007669"/>
    <property type="project" value="UniProtKB-SubCell"/>
</dbReference>
<dbReference type="GO" id="GO:0032299">
    <property type="term" value="C:ribonuclease H2 complex"/>
    <property type="evidence" value="ECO:0007669"/>
    <property type="project" value="TreeGrafter"/>
</dbReference>
<dbReference type="GO" id="GO:0030145">
    <property type="term" value="F:manganese ion binding"/>
    <property type="evidence" value="ECO:0007669"/>
    <property type="project" value="UniProtKB-UniRule"/>
</dbReference>
<dbReference type="GO" id="GO:0003723">
    <property type="term" value="F:RNA binding"/>
    <property type="evidence" value="ECO:0007669"/>
    <property type="project" value="InterPro"/>
</dbReference>
<dbReference type="GO" id="GO:0004523">
    <property type="term" value="F:RNA-DNA hybrid ribonuclease activity"/>
    <property type="evidence" value="ECO:0007669"/>
    <property type="project" value="UniProtKB-UniRule"/>
</dbReference>
<dbReference type="GO" id="GO:0043137">
    <property type="term" value="P:DNA replication, removal of RNA primer"/>
    <property type="evidence" value="ECO:0007669"/>
    <property type="project" value="TreeGrafter"/>
</dbReference>
<dbReference type="GO" id="GO:0006298">
    <property type="term" value="P:mismatch repair"/>
    <property type="evidence" value="ECO:0007669"/>
    <property type="project" value="TreeGrafter"/>
</dbReference>
<dbReference type="CDD" id="cd07182">
    <property type="entry name" value="RNase_HII_bacteria_HII_like"/>
    <property type="match status" value="1"/>
</dbReference>
<dbReference type="FunFam" id="3.30.420.10:FF:000113">
    <property type="entry name" value="Ribonuclease HII"/>
    <property type="match status" value="1"/>
</dbReference>
<dbReference type="Gene3D" id="3.30.420.10">
    <property type="entry name" value="Ribonuclease H-like superfamily/Ribonuclease H"/>
    <property type="match status" value="1"/>
</dbReference>
<dbReference type="HAMAP" id="MF_00052_B">
    <property type="entry name" value="RNase_HII_B"/>
    <property type="match status" value="1"/>
</dbReference>
<dbReference type="InterPro" id="IPR022898">
    <property type="entry name" value="RNase_HII"/>
</dbReference>
<dbReference type="InterPro" id="IPR001352">
    <property type="entry name" value="RNase_HII/HIII"/>
</dbReference>
<dbReference type="InterPro" id="IPR024567">
    <property type="entry name" value="RNase_HII/HIII_dom"/>
</dbReference>
<dbReference type="InterPro" id="IPR012337">
    <property type="entry name" value="RNaseH-like_sf"/>
</dbReference>
<dbReference type="InterPro" id="IPR036397">
    <property type="entry name" value="RNaseH_sf"/>
</dbReference>
<dbReference type="NCBIfam" id="NF000595">
    <property type="entry name" value="PRK00015.1-3"/>
    <property type="match status" value="1"/>
</dbReference>
<dbReference type="NCBIfam" id="NF000598">
    <property type="entry name" value="PRK00015.2-2"/>
    <property type="match status" value="1"/>
</dbReference>
<dbReference type="NCBIfam" id="NF000600">
    <property type="entry name" value="PRK00015.2-4"/>
    <property type="match status" value="1"/>
</dbReference>
<dbReference type="PANTHER" id="PTHR10954">
    <property type="entry name" value="RIBONUCLEASE H2 SUBUNIT A"/>
    <property type="match status" value="1"/>
</dbReference>
<dbReference type="PANTHER" id="PTHR10954:SF18">
    <property type="entry name" value="RIBONUCLEASE HII"/>
    <property type="match status" value="1"/>
</dbReference>
<dbReference type="Pfam" id="PF01351">
    <property type="entry name" value="RNase_HII"/>
    <property type="match status" value="1"/>
</dbReference>
<dbReference type="SUPFAM" id="SSF53098">
    <property type="entry name" value="Ribonuclease H-like"/>
    <property type="match status" value="1"/>
</dbReference>
<dbReference type="PROSITE" id="PS51975">
    <property type="entry name" value="RNASE_H_2"/>
    <property type="match status" value="1"/>
</dbReference>
<sequence>MPASWPPRTVIRKASGLRTLESALYRNGLGPVAGVDEVGRGACAGPLVVAACVLGPNRLESLAALDDSKKLGEKERERLFPVIRRYALAYHVVFIPSEEVDRRGVHVANIEGMRRAVAGLSVRPGYVLSDGFRVPGLPMPSLPVVGGDAAAACIAAASVLAKVSRDRLMVAMEREHPGYGFAEHKGYSTPAHTAALAELGPCAQHRYSFINVRRLVTAGTPQISGGLTDAEPGQCCELG</sequence>
<comment type="function">
    <text evidence="1">Endonuclease that specifically degrades the RNA of RNA-DNA hybrids.</text>
</comment>
<comment type="catalytic activity">
    <reaction evidence="1">
        <text>Endonucleolytic cleavage to 5'-phosphomonoester.</text>
        <dbReference type="EC" id="3.1.26.4"/>
    </reaction>
</comment>
<comment type="cofactor">
    <cofactor evidence="1">
        <name>Mn(2+)</name>
        <dbReference type="ChEBI" id="CHEBI:29035"/>
    </cofactor>
    <cofactor evidence="1">
        <name>Mg(2+)</name>
        <dbReference type="ChEBI" id="CHEBI:18420"/>
    </cofactor>
    <text evidence="1">Manganese or magnesium. Binds 1 divalent metal ion per monomer in the absence of substrate. May bind a second metal ion after substrate binding.</text>
</comment>
<comment type="subcellular location">
    <subcellularLocation>
        <location evidence="1">Cytoplasm</location>
    </subcellularLocation>
</comment>
<comment type="similarity">
    <text evidence="1">Belongs to the RNase HII family.</text>
</comment>